<gene>
    <name type="ordered locus">Rv3202A</name>
</gene>
<accession>P0DMM3</accession>
<reference key="1">
    <citation type="journal article" date="1998" name="Nature">
        <title>Deciphering the biology of Mycobacterium tuberculosis from the complete genome sequence.</title>
        <authorList>
            <person name="Cole S.T."/>
            <person name="Brosch R."/>
            <person name="Parkhill J."/>
            <person name="Garnier T."/>
            <person name="Churcher C.M."/>
            <person name="Harris D.E."/>
            <person name="Gordon S.V."/>
            <person name="Eiglmeier K."/>
            <person name="Gas S."/>
            <person name="Barry C.E. III"/>
            <person name="Tekaia F."/>
            <person name="Badcock K."/>
            <person name="Basham D."/>
            <person name="Brown D."/>
            <person name="Chillingworth T."/>
            <person name="Connor R."/>
            <person name="Davies R.M."/>
            <person name="Devlin K."/>
            <person name="Feltwell T."/>
            <person name="Gentles S."/>
            <person name="Hamlin N."/>
            <person name="Holroyd S."/>
            <person name="Hornsby T."/>
            <person name="Jagels K."/>
            <person name="Krogh A."/>
            <person name="McLean J."/>
            <person name="Moule S."/>
            <person name="Murphy L.D."/>
            <person name="Oliver S."/>
            <person name="Osborne J."/>
            <person name="Quail M.A."/>
            <person name="Rajandream M.A."/>
            <person name="Rogers J."/>
            <person name="Rutter S."/>
            <person name="Seeger K."/>
            <person name="Skelton S."/>
            <person name="Squares S."/>
            <person name="Squares R."/>
            <person name="Sulston J.E."/>
            <person name="Taylor K."/>
            <person name="Whitehead S."/>
            <person name="Barrell B.G."/>
        </authorList>
    </citation>
    <scope>NUCLEOTIDE SEQUENCE [LARGE SCALE GENOMIC DNA]</scope>
    <source>
        <strain>ATCC 25618 / H37Rv</strain>
    </source>
</reference>
<reference key="2">
    <citation type="journal article" date="2011" name="Mol. Cell. Proteomics">
        <title>Proteogenomic analysis of Mycobacterium tuberculosis by high resolution mass spectrometry.</title>
        <authorList>
            <person name="Kelkar D.S."/>
            <person name="Kumar D."/>
            <person name="Kumar P."/>
            <person name="Balakrishnan L."/>
            <person name="Muthusamy B."/>
            <person name="Yadav A.K."/>
            <person name="Shrivastava P."/>
            <person name="Marimuthu A."/>
            <person name="Anand S."/>
            <person name="Sundaram H."/>
            <person name="Kingsbury R."/>
            <person name="Harsha H.C."/>
            <person name="Nair B."/>
            <person name="Prasad T.S."/>
            <person name="Chauhan D.S."/>
            <person name="Katoch K."/>
            <person name="Katoch V.M."/>
            <person name="Kumar P."/>
            <person name="Chaerkady R."/>
            <person name="Ramachandran S."/>
            <person name="Dash D."/>
            <person name="Pandey A."/>
        </authorList>
    </citation>
    <scope>IDENTIFICATION BY MASS SPECTROMETRY [LARGE SCALE ANALYSIS]</scope>
    <source>
        <strain>ATCC 25618 / H37Rv</strain>
    </source>
</reference>
<dbReference type="EMBL" id="AL123456">
    <property type="status" value="NOT_ANNOTATED_CDS"/>
    <property type="molecule type" value="Genomic_DNA"/>
</dbReference>
<dbReference type="InParanoid" id="P0DMM3"/>
<dbReference type="Proteomes" id="UP000001584">
    <property type="component" value="Chromosome"/>
</dbReference>
<sequence length="72" mass="7384">MATMAAVVGGGPQDEIPEADAVEQGRAVDFDDEAGLDTAYLSGGAGDRDASEADVVDQAFVVPVADDEEIDR</sequence>
<keyword id="KW-1185">Reference proteome</keyword>
<organism>
    <name type="scientific">Mycobacterium tuberculosis (strain ATCC 25618 / H37Rv)</name>
    <dbReference type="NCBI Taxonomy" id="83332"/>
    <lineage>
        <taxon>Bacteria</taxon>
        <taxon>Bacillati</taxon>
        <taxon>Actinomycetota</taxon>
        <taxon>Actinomycetes</taxon>
        <taxon>Mycobacteriales</taxon>
        <taxon>Mycobacteriaceae</taxon>
        <taxon>Mycobacterium</taxon>
        <taxon>Mycobacterium tuberculosis complex</taxon>
    </lineage>
</organism>
<name>Y3202_MYCTU</name>
<feature type="chain" id="PRO_0000430093" description="Uncharacterized protein Rv3202A">
    <location>
        <begin position="1"/>
        <end position="72"/>
    </location>
</feature>
<protein>
    <recommendedName>
        <fullName>Uncharacterized protein Rv3202A</fullName>
    </recommendedName>
</protein>
<proteinExistence type="evidence at protein level"/>